<organism>
    <name type="scientific">Thermococcus onnurineus (strain NA1)</name>
    <dbReference type="NCBI Taxonomy" id="523850"/>
    <lineage>
        <taxon>Archaea</taxon>
        <taxon>Methanobacteriati</taxon>
        <taxon>Methanobacteriota</taxon>
        <taxon>Thermococci</taxon>
        <taxon>Thermococcales</taxon>
        <taxon>Thermococcaceae</taxon>
        <taxon>Thermococcus</taxon>
    </lineage>
</organism>
<dbReference type="EC" id="5.3.1.16" evidence="1"/>
<dbReference type="EMBL" id="CP000855">
    <property type="protein sequence ID" value="ACJ16371.1"/>
    <property type="molecule type" value="Genomic_DNA"/>
</dbReference>
<dbReference type="RefSeq" id="WP_012571843.1">
    <property type="nucleotide sequence ID" value="NC_011529.1"/>
</dbReference>
<dbReference type="SMR" id="B6YWA8"/>
<dbReference type="STRING" id="523850.TON_0883"/>
<dbReference type="GeneID" id="7017186"/>
<dbReference type="KEGG" id="ton:TON_0883"/>
<dbReference type="PATRIC" id="fig|523850.10.peg.891"/>
<dbReference type="eggNOG" id="arCOG00618">
    <property type="taxonomic scope" value="Archaea"/>
</dbReference>
<dbReference type="HOGENOM" id="CLU_048577_1_2_2"/>
<dbReference type="OrthoDB" id="52866at2157"/>
<dbReference type="UniPathway" id="UPA00031">
    <property type="reaction ID" value="UER00009"/>
</dbReference>
<dbReference type="Proteomes" id="UP000002727">
    <property type="component" value="Chromosome"/>
</dbReference>
<dbReference type="GO" id="GO:0005737">
    <property type="term" value="C:cytoplasm"/>
    <property type="evidence" value="ECO:0007669"/>
    <property type="project" value="UniProtKB-SubCell"/>
</dbReference>
<dbReference type="GO" id="GO:0003949">
    <property type="term" value="F:1-(5-phosphoribosyl)-5-[(5-phosphoribosylamino)methylideneamino]imidazole-4-carboxamide isomerase activity"/>
    <property type="evidence" value="ECO:0007669"/>
    <property type="project" value="UniProtKB-UniRule"/>
</dbReference>
<dbReference type="GO" id="GO:0000105">
    <property type="term" value="P:L-histidine biosynthetic process"/>
    <property type="evidence" value="ECO:0007669"/>
    <property type="project" value="UniProtKB-UniRule"/>
</dbReference>
<dbReference type="GO" id="GO:0000162">
    <property type="term" value="P:L-tryptophan biosynthetic process"/>
    <property type="evidence" value="ECO:0007669"/>
    <property type="project" value="TreeGrafter"/>
</dbReference>
<dbReference type="CDD" id="cd04732">
    <property type="entry name" value="HisA"/>
    <property type="match status" value="1"/>
</dbReference>
<dbReference type="FunFam" id="3.20.20.70:FF:000009">
    <property type="entry name" value="1-(5-phosphoribosyl)-5-[(5-phosphoribosylamino)methylideneamino] imidazole-4-carboxamide isomerase"/>
    <property type="match status" value="1"/>
</dbReference>
<dbReference type="Gene3D" id="3.20.20.70">
    <property type="entry name" value="Aldolase class I"/>
    <property type="match status" value="1"/>
</dbReference>
<dbReference type="HAMAP" id="MF_01014">
    <property type="entry name" value="HisA"/>
    <property type="match status" value="1"/>
</dbReference>
<dbReference type="InterPro" id="IPR013785">
    <property type="entry name" value="Aldolase_TIM"/>
</dbReference>
<dbReference type="InterPro" id="IPR006062">
    <property type="entry name" value="His_biosynth"/>
</dbReference>
<dbReference type="InterPro" id="IPR006063">
    <property type="entry name" value="HisA_bact_arch"/>
</dbReference>
<dbReference type="InterPro" id="IPR044524">
    <property type="entry name" value="Isoase_HisA-like"/>
</dbReference>
<dbReference type="InterPro" id="IPR023016">
    <property type="entry name" value="Isoase_HisA-like_bact"/>
</dbReference>
<dbReference type="InterPro" id="IPR011060">
    <property type="entry name" value="RibuloseP-bd_barrel"/>
</dbReference>
<dbReference type="NCBIfam" id="TIGR00007">
    <property type="entry name" value="1-(5-phosphoribosyl)-5-[(5-phosphoribosylamino)methylideneamino]imidazole-4-carboxamide isomerase"/>
    <property type="match status" value="1"/>
</dbReference>
<dbReference type="NCBIfam" id="NF003156">
    <property type="entry name" value="PRK04128.1"/>
    <property type="match status" value="1"/>
</dbReference>
<dbReference type="PANTHER" id="PTHR43090">
    <property type="entry name" value="1-(5-PHOSPHORIBOSYL)-5-[(5-PHOSPHORIBOSYLAMINO)METHYLIDENEAMINO] IMIDAZOLE-4-CARBOXAMIDE ISOMERASE"/>
    <property type="match status" value="1"/>
</dbReference>
<dbReference type="PANTHER" id="PTHR43090:SF7">
    <property type="entry name" value="1-(5-PHOSPHORIBOSYL)-5-[(5-PHOSPHORIBOSYLAMINO)METHYLIDENEAMINO] IMIDAZOLE-4-CARBOXAMIDE ISOMERASE"/>
    <property type="match status" value="1"/>
</dbReference>
<dbReference type="Pfam" id="PF00977">
    <property type="entry name" value="His_biosynth"/>
    <property type="match status" value="1"/>
</dbReference>
<dbReference type="SUPFAM" id="SSF51366">
    <property type="entry name" value="Ribulose-phoshate binding barrel"/>
    <property type="match status" value="1"/>
</dbReference>
<proteinExistence type="inferred from homology"/>
<protein>
    <recommendedName>
        <fullName evidence="1">1-(5-phosphoribosyl)-5-[(5-phosphoribosylamino)methylideneamino] imidazole-4-carboxamide isomerase</fullName>
        <ecNumber evidence="1">5.3.1.16</ecNumber>
    </recommendedName>
    <alternativeName>
        <fullName evidence="1">Phosphoribosylformimino-5-aminoimidazole carboxamide ribotide isomerase</fullName>
    </alternativeName>
</protein>
<sequence length="229" mass="25510">MRIYPAIDLMGGKAVRLYRGQKEKVKVYGDPVEIASRFTELVDKIHVVDLDGAFTGKPQNLDVVKEIIEETGLKVQVGGGFRSYESIAKAYEIGAENVIIGTKAFDLEFLEKITDNFDGITVSLDARGGKIAVKGWLEESSLKVGEAYEMLREYVDRFIYTSIERDGTLTGIESIERFWKDEEFIYAGGVSSVDDVLKLRRVGFSGAIVGKALYESEVSLKELLEVLEC</sequence>
<comment type="catalytic activity">
    <reaction evidence="1">
        <text>1-(5-phospho-beta-D-ribosyl)-5-[(5-phospho-beta-D-ribosylamino)methylideneamino]imidazole-4-carboxamide = 5-[(5-phospho-1-deoxy-D-ribulos-1-ylimino)methylamino]-1-(5-phospho-beta-D-ribosyl)imidazole-4-carboxamide</text>
        <dbReference type="Rhea" id="RHEA:15469"/>
        <dbReference type="ChEBI" id="CHEBI:58435"/>
        <dbReference type="ChEBI" id="CHEBI:58525"/>
        <dbReference type="EC" id="5.3.1.16"/>
    </reaction>
</comment>
<comment type="pathway">
    <text evidence="1">Amino-acid biosynthesis; L-histidine biosynthesis; L-histidine from 5-phospho-alpha-D-ribose 1-diphosphate: step 4/9.</text>
</comment>
<comment type="subcellular location">
    <subcellularLocation>
        <location evidence="1">Cytoplasm</location>
    </subcellularLocation>
</comment>
<comment type="similarity">
    <text evidence="1">Belongs to the HisA/HisF family.</text>
</comment>
<gene>
    <name evidence="1" type="primary">hisA</name>
    <name type="ordered locus">TON_0883</name>
</gene>
<accession>B6YWA8</accession>
<feature type="chain" id="PRO_1000190575" description="1-(5-phosphoribosyl)-5-[(5-phosphoribosylamino)methylideneamino] imidazole-4-carboxamide isomerase">
    <location>
        <begin position="1"/>
        <end position="229"/>
    </location>
</feature>
<feature type="active site" description="Proton acceptor" evidence="1">
    <location>
        <position position="8"/>
    </location>
</feature>
<feature type="active site" description="Proton donor" evidence="1">
    <location>
        <position position="125"/>
    </location>
</feature>
<evidence type="ECO:0000255" key="1">
    <source>
        <dbReference type="HAMAP-Rule" id="MF_01014"/>
    </source>
</evidence>
<keyword id="KW-0028">Amino-acid biosynthesis</keyword>
<keyword id="KW-0963">Cytoplasm</keyword>
<keyword id="KW-0368">Histidine biosynthesis</keyword>
<keyword id="KW-0413">Isomerase</keyword>
<name>HIS4_THEON</name>
<reference key="1">
    <citation type="journal article" date="2008" name="J. Bacteriol.">
        <title>The complete genome sequence of Thermococcus onnurineus NA1 reveals a mixed heterotrophic and carboxydotrophic metabolism.</title>
        <authorList>
            <person name="Lee H.S."/>
            <person name="Kang S.G."/>
            <person name="Bae S.S."/>
            <person name="Lim J.K."/>
            <person name="Cho Y."/>
            <person name="Kim Y.J."/>
            <person name="Jeon J.H."/>
            <person name="Cha S.-S."/>
            <person name="Kwon K.K."/>
            <person name="Kim H.-T."/>
            <person name="Park C.-J."/>
            <person name="Lee H.-W."/>
            <person name="Kim S.I."/>
            <person name="Chun J."/>
            <person name="Colwell R.R."/>
            <person name="Kim S.-J."/>
            <person name="Lee J.-H."/>
        </authorList>
    </citation>
    <scope>NUCLEOTIDE SEQUENCE [LARGE SCALE GENOMIC DNA]</scope>
    <source>
        <strain>NA1</strain>
    </source>
</reference>